<reference key="1">
    <citation type="submission" date="1999-07" db="EMBL/GenBank/DDBJ databases">
        <title>The fission yeast cDNA complementing the budding yeast ade8 mutation: cloning, sequencing, and application to genetic analysis.</title>
        <authorList>
            <person name="Toh-e A."/>
            <person name="Oguchi T."/>
        </authorList>
    </citation>
    <scope>NUCLEOTIDE SEQUENCE [MRNA]</scope>
    <source>
        <strain>TP4-1D</strain>
    </source>
</reference>
<reference key="2">
    <citation type="journal article" date="2002" name="Nature">
        <title>The genome sequence of Schizosaccharomyces pombe.</title>
        <authorList>
            <person name="Wood V."/>
            <person name="Gwilliam R."/>
            <person name="Rajandream M.A."/>
            <person name="Lyne M.H."/>
            <person name="Lyne R."/>
            <person name="Stewart A."/>
            <person name="Sgouros J.G."/>
            <person name="Peat N."/>
            <person name="Hayles J."/>
            <person name="Baker S.G."/>
            <person name="Basham D."/>
            <person name="Bowman S."/>
            <person name="Brooks K."/>
            <person name="Brown D."/>
            <person name="Brown S."/>
            <person name="Chillingworth T."/>
            <person name="Churcher C.M."/>
            <person name="Collins M."/>
            <person name="Connor R."/>
            <person name="Cronin A."/>
            <person name="Davis P."/>
            <person name="Feltwell T."/>
            <person name="Fraser A."/>
            <person name="Gentles S."/>
            <person name="Goble A."/>
            <person name="Hamlin N."/>
            <person name="Harris D.E."/>
            <person name="Hidalgo J."/>
            <person name="Hodgson G."/>
            <person name="Holroyd S."/>
            <person name="Hornsby T."/>
            <person name="Howarth S."/>
            <person name="Huckle E.J."/>
            <person name="Hunt S."/>
            <person name="Jagels K."/>
            <person name="James K.D."/>
            <person name="Jones L."/>
            <person name="Jones M."/>
            <person name="Leather S."/>
            <person name="McDonald S."/>
            <person name="McLean J."/>
            <person name="Mooney P."/>
            <person name="Moule S."/>
            <person name="Mungall K.L."/>
            <person name="Murphy L.D."/>
            <person name="Niblett D."/>
            <person name="Odell C."/>
            <person name="Oliver K."/>
            <person name="O'Neil S."/>
            <person name="Pearson D."/>
            <person name="Quail M.A."/>
            <person name="Rabbinowitsch E."/>
            <person name="Rutherford K.M."/>
            <person name="Rutter S."/>
            <person name="Saunders D."/>
            <person name="Seeger K."/>
            <person name="Sharp S."/>
            <person name="Skelton J."/>
            <person name="Simmonds M.N."/>
            <person name="Squares R."/>
            <person name="Squares S."/>
            <person name="Stevens K."/>
            <person name="Taylor K."/>
            <person name="Taylor R.G."/>
            <person name="Tivey A."/>
            <person name="Walsh S.V."/>
            <person name="Warren T."/>
            <person name="Whitehead S."/>
            <person name="Woodward J.R."/>
            <person name="Volckaert G."/>
            <person name="Aert R."/>
            <person name="Robben J."/>
            <person name="Grymonprez B."/>
            <person name="Weltjens I."/>
            <person name="Vanstreels E."/>
            <person name="Rieger M."/>
            <person name="Schaefer M."/>
            <person name="Mueller-Auer S."/>
            <person name="Gabel C."/>
            <person name="Fuchs M."/>
            <person name="Duesterhoeft A."/>
            <person name="Fritzc C."/>
            <person name="Holzer E."/>
            <person name="Moestl D."/>
            <person name="Hilbert H."/>
            <person name="Borzym K."/>
            <person name="Langer I."/>
            <person name="Beck A."/>
            <person name="Lehrach H."/>
            <person name="Reinhardt R."/>
            <person name="Pohl T.M."/>
            <person name="Eger P."/>
            <person name="Zimmermann W."/>
            <person name="Wedler H."/>
            <person name="Wambutt R."/>
            <person name="Purnelle B."/>
            <person name="Goffeau A."/>
            <person name="Cadieu E."/>
            <person name="Dreano S."/>
            <person name="Gloux S."/>
            <person name="Lelaure V."/>
            <person name="Mottier S."/>
            <person name="Galibert F."/>
            <person name="Aves S.J."/>
            <person name="Xiang Z."/>
            <person name="Hunt C."/>
            <person name="Moore K."/>
            <person name="Hurst S.M."/>
            <person name="Lucas M."/>
            <person name="Rochet M."/>
            <person name="Gaillardin C."/>
            <person name="Tallada V.A."/>
            <person name="Garzon A."/>
            <person name="Thode G."/>
            <person name="Daga R.R."/>
            <person name="Cruzado L."/>
            <person name="Jimenez J."/>
            <person name="Sanchez M."/>
            <person name="del Rey F."/>
            <person name="Benito J."/>
            <person name="Dominguez A."/>
            <person name="Revuelta J.L."/>
            <person name="Moreno S."/>
            <person name="Armstrong J."/>
            <person name="Forsburg S.L."/>
            <person name="Cerutti L."/>
            <person name="Lowe T."/>
            <person name="McCombie W.R."/>
            <person name="Paulsen I."/>
            <person name="Potashkin J."/>
            <person name="Shpakovski G.V."/>
            <person name="Ussery D."/>
            <person name="Barrell B.G."/>
            <person name="Nurse P."/>
        </authorList>
    </citation>
    <scope>NUCLEOTIDE SEQUENCE [LARGE SCALE GENOMIC DNA]</scope>
    <source>
        <strain>972 / ATCC 24843</strain>
    </source>
</reference>
<reference key="3">
    <citation type="journal article" date="2000" name="Genes Cells">
        <title>Large-scale screening of intracellular protein localization in living fission yeast cells by the use of a GFP-fusion genomic DNA library.</title>
        <authorList>
            <person name="Ding D.-Q."/>
            <person name="Tomita Y."/>
            <person name="Yamamoto A."/>
            <person name="Chikashige Y."/>
            <person name="Haraguchi T."/>
            <person name="Hiraoka Y."/>
        </authorList>
    </citation>
    <scope>NUCLEOTIDE SEQUENCE [LARGE SCALE GENOMIC DNA] OF 1-147</scope>
    <source>
        <strain>ATCC 38364 / 968</strain>
    </source>
</reference>
<protein>
    <recommendedName>
        <fullName>Phosphoribosylglycinamide formyltransferase</fullName>
        <ecNumber>2.1.2.2</ecNumber>
    </recommendedName>
    <alternativeName>
        <fullName>5'-phosphoribosylglycinamide transformylase</fullName>
    </alternativeName>
    <alternativeName>
        <fullName>GAR transformylase</fullName>
        <shortName>GART</shortName>
    </alternativeName>
</protein>
<accession>Q9UUK7</accession>
<accession>Q9UU36</accession>
<accession>Q9Y7S7</accession>
<comment type="catalytic activity">
    <reaction>
        <text>N(1)-(5-phospho-beta-D-ribosyl)glycinamide + (6R)-10-formyltetrahydrofolate = N(2)-formyl-N(1)-(5-phospho-beta-D-ribosyl)glycinamide + (6S)-5,6,7,8-tetrahydrofolate + H(+)</text>
        <dbReference type="Rhea" id="RHEA:15053"/>
        <dbReference type="ChEBI" id="CHEBI:15378"/>
        <dbReference type="ChEBI" id="CHEBI:57453"/>
        <dbReference type="ChEBI" id="CHEBI:143788"/>
        <dbReference type="ChEBI" id="CHEBI:147286"/>
        <dbReference type="ChEBI" id="CHEBI:195366"/>
        <dbReference type="EC" id="2.1.2.2"/>
    </reaction>
</comment>
<comment type="pathway">
    <text>Purine metabolism; IMP biosynthesis via de novo pathway; N(2)-formyl-N(1)-(5-phospho-D-ribosyl)glycinamide from N(1)-(5-phospho-D-ribosyl)glycinamide (10-formyl THF route): step 1/1.</text>
</comment>
<comment type="similarity">
    <text evidence="2">Belongs to the GART family.</text>
</comment>
<comment type="sequence caution" evidence="2">
    <conflict type="erroneous initiation">
        <sequence resource="EMBL-CDS" id="BAA87143"/>
    </conflict>
</comment>
<proteinExistence type="evidence at transcript level"/>
<sequence length="207" mass="22252">MVASLVVLISGSGSNLQAIIDATLNGVLKGEAAVTHVLSNRKNAYGLERAAKAGIPTSLHTLLPYKKEYGPEIGRKKYDAELAEKIIKLQPSLVVCAGWMHILSPEVLIPLETNKIGIINLHPALPGAFNGIHAIERAFEAAQQGKITHTGAMVHWVIAAVDEGKPIIVQEVPILSTDSIEALEEKIHAAEHVILVQAIHQIITDNK</sequence>
<evidence type="ECO:0000250" key="1"/>
<evidence type="ECO:0000305" key="2"/>
<keyword id="KW-0658">Purine biosynthesis</keyword>
<keyword id="KW-1185">Reference proteome</keyword>
<keyword id="KW-0808">Transferase</keyword>
<gene>
    <name type="primary">ade5</name>
    <name type="synonym">ade8</name>
    <name type="ORF">SPCC24E4.01</name>
    <name type="ORF">SPCC569.08c</name>
</gene>
<organism>
    <name type="scientific">Schizosaccharomyces pombe (strain 972 / ATCC 24843)</name>
    <name type="common">Fission yeast</name>
    <dbReference type="NCBI Taxonomy" id="284812"/>
    <lineage>
        <taxon>Eukaryota</taxon>
        <taxon>Fungi</taxon>
        <taxon>Dikarya</taxon>
        <taxon>Ascomycota</taxon>
        <taxon>Taphrinomycotina</taxon>
        <taxon>Schizosaccharomycetes</taxon>
        <taxon>Schizosaccharomycetales</taxon>
        <taxon>Schizosaccharomycetaceae</taxon>
        <taxon>Schizosaccharomyces</taxon>
    </lineage>
</organism>
<feature type="chain" id="PRO_0000074953" description="Phosphoribosylglycinamide formyltransferase">
    <location>
        <begin position="1"/>
        <end position="207"/>
    </location>
</feature>
<feature type="active site" description="Proton donor" evidence="1">
    <location>
        <position position="122"/>
    </location>
</feature>
<feature type="binding site" evidence="1">
    <location>
        <begin position="13"/>
        <end position="15"/>
    </location>
    <ligand>
        <name>N(1)-(5-phospho-beta-D-ribosyl)glycinamide</name>
        <dbReference type="ChEBI" id="CHEBI:143788"/>
    </ligand>
</feature>
<feature type="binding site" evidence="1">
    <location>
        <begin position="100"/>
        <end position="103"/>
    </location>
    <ligand>
        <name>(6R)-10-formyltetrahydrofolate</name>
        <dbReference type="ChEBI" id="CHEBI:195366"/>
    </ligand>
</feature>
<feature type="binding site" evidence="1">
    <location>
        <position position="120"/>
    </location>
    <ligand>
        <name>(6R)-10-formyltetrahydrofolate</name>
        <dbReference type="ChEBI" id="CHEBI:195366"/>
    </ligand>
</feature>
<feature type="binding site" evidence="1">
    <location>
        <position position="162"/>
    </location>
    <ligand>
        <name>(6R)-10-formyltetrahydrofolate</name>
        <dbReference type="ChEBI" id="CHEBI:195366"/>
    </ligand>
</feature>
<feature type="binding site" evidence="1">
    <location>
        <position position="191"/>
    </location>
    <ligand>
        <name>N(1)-(5-phospho-beta-D-ribosyl)glycinamide</name>
        <dbReference type="ChEBI" id="CHEBI:143788"/>
    </ligand>
</feature>
<feature type="site" description="Raises pKa of active site His" evidence="1">
    <location>
        <position position="162"/>
    </location>
</feature>
<name>PUR3_SCHPO</name>
<dbReference type="EC" id="2.1.2.2"/>
<dbReference type="EMBL" id="AF171879">
    <property type="protein sequence ID" value="AAD46927.1"/>
    <property type="molecule type" value="mRNA"/>
</dbReference>
<dbReference type="EMBL" id="CU329672">
    <property type="protein sequence ID" value="CAB42069.2"/>
    <property type="molecule type" value="Genomic_DNA"/>
</dbReference>
<dbReference type="EMBL" id="AB027839">
    <property type="protein sequence ID" value="BAA87143.1"/>
    <property type="status" value="ALT_INIT"/>
    <property type="molecule type" value="Genomic_DNA"/>
</dbReference>
<dbReference type="PIR" id="T51296">
    <property type="entry name" value="T51296"/>
</dbReference>
<dbReference type="RefSeq" id="XP_001713172.1">
    <property type="nucleotide sequence ID" value="XM_001713120.2"/>
</dbReference>
<dbReference type="SMR" id="Q9UUK7"/>
<dbReference type="FunCoup" id="Q9UUK7">
    <property type="interactions" value="435"/>
</dbReference>
<dbReference type="STRING" id="284812.Q9UUK7"/>
<dbReference type="iPTMnet" id="Q9UUK7"/>
<dbReference type="PaxDb" id="4896-SPCC569.08c.1"/>
<dbReference type="EnsemblFungi" id="SPCC569.08c.1">
    <property type="protein sequence ID" value="SPCC569.08c.1:pep"/>
    <property type="gene ID" value="SPCC569.08c"/>
</dbReference>
<dbReference type="PomBase" id="SPCC569.08c">
    <property type="gene designation" value="ade5"/>
</dbReference>
<dbReference type="VEuPathDB" id="FungiDB:SPCC569.08c"/>
<dbReference type="eggNOG" id="KOG3076">
    <property type="taxonomic scope" value="Eukaryota"/>
</dbReference>
<dbReference type="HOGENOM" id="CLU_038395_0_1_1"/>
<dbReference type="InParanoid" id="Q9UUK7"/>
<dbReference type="OMA" id="HYVDEGM"/>
<dbReference type="PhylomeDB" id="Q9UUK7"/>
<dbReference type="UniPathway" id="UPA00074">
    <property type="reaction ID" value="UER00126"/>
</dbReference>
<dbReference type="PRO" id="PR:Q9UUK7"/>
<dbReference type="Proteomes" id="UP000002485">
    <property type="component" value="Chromosome III"/>
</dbReference>
<dbReference type="GO" id="GO:0005737">
    <property type="term" value="C:cytoplasm"/>
    <property type="evidence" value="ECO:0000318"/>
    <property type="project" value="GO_Central"/>
</dbReference>
<dbReference type="GO" id="GO:0005634">
    <property type="term" value="C:nucleus"/>
    <property type="evidence" value="ECO:0000266"/>
    <property type="project" value="PomBase"/>
</dbReference>
<dbReference type="GO" id="GO:0004644">
    <property type="term" value="F:phosphoribosylglycinamide formyltransferase activity"/>
    <property type="evidence" value="ECO:0000318"/>
    <property type="project" value="GO_Central"/>
</dbReference>
<dbReference type="GO" id="GO:0006189">
    <property type="term" value="P:'de novo' IMP biosynthetic process"/>
    <property type="evidence" value="ECO:0000318"/>
    <property type="project" value="GO_Central"/>
</dbReference>
<dbReference type="GO" id="GO:0046084">
    <property type="term" value="P:adenine biosynthetic process"/>
    <property type="evidence" value="ECO:0000266"/>
    <property type="project" value="PomBase"/>
</dbReference>
<dbReference type="CDD" id="cd08645">
    <property type="entry name" value="FMT_core_GART"/>
    <property type="match status" value="1"/>
</dbReference>
<dbReference type="FunFam" id="3.40.50.170:FF:000022">
    <property type="entry name" value="Related to glycinamide ribonucleotide transformylase"/>
    <property type="match status" value="1"/>
</dbReference>
<dbReference type="Gene3D" id="3.40.50.170">
    <property type="entry name" value="Formyl transferase, N-terminal domain"/>
    <property type="match status" value="1"/>
</dbReference>
<dbReference type="HAMAP" id="MF_01930">
    <property type="entry name" value="PurN"/>
    <property type="match status" value="1"/>
</dbReference>
<dbReference type="InterPro" id="IPR002376">
    <property type="entry name" value="Formyl_transf_N"/>
</dbReference>
<dbReference type="InterPro" id="IPR036477">
    <property type="entry name" value="Formyl_transf_N_sf"/>
</dbReference>
<dbReference type="InterPro" id="IPR004607">
    <property type="entry name" value="GART"/>
</dbReference>
<dbReference type="InterPro" id="IPR001555">
    <property type="entry name" value="GART_AS"/>
</dbReference>
<dbReference type="NCBIfam" id="TIGR00639">
    <property type="entry name" value="PurN"/>
    <property type="match status" value="1"/>
</dbReference>
<dbReference type="PANTHER" id="PTHR43369">
    <property type="entry name" value="PHOSPHORIBOSYLGLYCINAMIDE FORMYLTRANSFERASE"/>
    <property type="match status" value="1"/>
</dbReference>
<dbReference type="PANTHER" id="PTHR43369:SF2">
    <property type="entry name" value="PHOSPHORIBOSYLGLYCINAMIDE FORMYLTRANSFERASE"/>
    <property type="match status" value="1"/>
</dbReference>
<dbReference type="Pfam" id="PF00551">
    <property type="entry name" value="Formyl_trans_N"/>
    <property type="match status" value="1"/>
</dbReference>
<dbReference type="SUPFAM" id="SSF53328">
    <property type="entry name" value="Formyltransferase"/>
    <property type="match status" value="1"/>
</dbReference>
<dbReference type="PROSITE" id="PS00373">
    <property type="entry name" value="GART"/>
    <property type="match status" value="1"/>
</dbReference>